<feature type="chain" id="PRO_1000095679" description="Holliday junction resolvase RecU">
    <location>
        <begin position="1"/>
        <end position="202"/>
    </location>
</feature>
<feature type="binding site" evidence="1">
    <location>
        <position position="85"/>
    </location>
    <ligand>
        <name>Mg(2+)</name>
        <dbReference type="ChEBI" id="CHEBI:18420"/>
    </ligand>
</feature>
<feature type="binding site" evidence="1">
    <location>
        <position position="87"/>
    </location>
    <ligand>
        <name>Mg(2+)</name>
        <dbReference type="ChEBI" id="CHEBI:18420"/>
    </ligand>
</feature>
<feature type="binding site" evidence="1">
    <location>
        <position position="100"/>
    </location>
    <ligand>
        <name>Mg(2+)</name>
        <dbReference type="ChEBI" id="CHEBI:18420"/>
    </ligand>
</feature>
<feature type="binding site" evidence="1">
    <location>
        <position position="119"/>
    </location>
    <ligand>
        <name>Mg(2+)</name>
        <dbReference type="ChEBI" id="CHEBI:18420"/>
    </ligand>
</feature>
<feature type="site" description="Transition state stabilizer" evidence="1">
    <location>
        <position position="102"/>
    </location>
</feature>
<dbReference type="EC" id="3.1.21.10" evidence="1"/>
<dbReference type="EMBL" id="CP001129">
    <property type="protein sequence ID" value="ACG62903.1"/>
    <property type="molecule type" value="Genomic_DNA"/>
</dbReference>
<dbReference type="RefSeq" id="WP_012516159.1">
    <property type="nucleotide sequence ID" value="NC_011134.1"/>
</dbReference>
<dbReference type="SMR" id="B4U4I6"/>
<dbReference type="KEGG" id="sez:Sez_1570"/>
<dbReference type="HOGENOM" id="CLU_096340_0_0_9"/>
<dbReference type="Proteomes" id="UP000001873">
    <property type="component" value="Chromosome"/>
</dbReference>
<dbReference type="GO" id="GO:0005737">
    <property type="term" value="C:cytoplasm"/>
    <property type="evidence" value="ECO:0007669"/>
    <property type="project" value="UniProtKB-SubCell"/>
</dbReference>
<dbReference type="GO" id="GO:0004519">
    <property type="term" value="F:endonuclease activity"/>
    <property type="evidence" value="ECO:0007669"/>
    <property type="project" value="UniProtKB-UniRule"/>
</dbReference>
<dbReference type="GO" id="GO:0000287">
    <property type="term" value="F:magnesium ion binding"/>
    <property type="evidence" value="ECO:0007669"/>
    <property type="project" value="UniProtKB-UniRule"/>
</dbReference>
<dbReference type="GO" id="GO:0003676">
    <property type="term" value="F:nucleic acid binding"/>
    <property type="evidence" value="ECO:0007669"/>
    <property type="project" value="InterPro"/>
</dbReference>
<dbReference type="GO" id="GO:0007059">
    <property type="term" value="P:chromosome segregation"/>
    <property type="evidence" value="ECO:0007669"/>
    <property type="project" value="UniProtKB-UniRule"/>
</dbReference>
<dbReference type="GO" id="GO:0006310">
    <property type="term" value="P:DNA recombination"/>
    <property type="evidence" value="ECO:0007669"/>
    <property type="project" value="UniProtKB-UniRule"/>
</dbReference>
<dbReference type="GO" id="GO:0006281">
    <property type="term" value="P:DNA repair"/>
    <property type="evidence" value="ECO:0007669"/>
    <property type="project" value="UniProtKB-UniRule"/>
</dbReference>
<dbReference type="CDD" id="cd22354">
    <property type="entry name" value="RecU-like"/>
    <property type="match status" value="1"/>
</dbReference>
<dbReference type="Gene3D" id="3.40.1350.10">
    <property type="match status" value="1"/>
</dbReference>
<dbReference type="HAMAP" id="MF_00130">
    <property type="entry name" value="RecU"/>
    <property type="match status" value="1"/>
</dbReference>
<dbReference type="InterPro" id="IPR004612">
    <property type="entry name" value="Resolv_RecU"/>
</dbReference>
<dbReference type="InterPro" id="IPR011335">
    <property type="entry name" value="Restrct_endonuc-II-like"/>
</dbReference>
<dbReference type="InterPro" id="IPR011856">
    <property type="entry name" value="tRNA_endonuc-like_dom_sf"/>
</dbReference>
<dbReference type="NCBIfam" id="NF002580">
    <property type="entry name" value="PRK02234.1-1"/>
    <property type="match status" value="1"/>
</dbReference>
<dbReference type="NCBIfam" id="NF002584">
    <property type="entry name" value="PRK02234.1-5"/>
    <property type="match status" value="1"/>
</dbReference>
<dbReference type="NCBIfam" id="TIGR00648">
    <property type="entry name" value="recU"/>
    <property type="match status" value="1"/>
</dbReference>
<dbReference type="Pfam" id="PF03838">
    <property type="entry name" value="RecU"/>
    <property type="match status" value="1"/>
</dbReference>
<dbReference type="PIRSF" id="PIRSF037785">
    <property type="entry name" value="RecU"/>
    <property type="match status" value="1"/>
</dbReference>
<dbReference type="SUPFAM" id="SSF52980">
    <property type="entry name" value="Restriction endonuclease-like"/>
    <property type="match status" value="1"/>
</dbReference>
<protein>
    <recommendedName>
        <fullName evidence="1">Holliday junction resolvase RecU</fullName>
        <ecNumber evidence="1">3.1.21.10</ecNumber>
    </recommendedName>
    <alternativeName>
        <fullName evidence="1">Recombination protein U homolog</fullName>
    </alternativeName>
</protein>
<gene>
    <name evidence="1" type="primary">recU</name>
    <name type="ordered locus">Sez_1570</name>
</gene>
<keyword id="KW-0963">Cytoplasm</keyword>
<keyword id="KW-0227">DNA damage</keyword>
<keyword id="KW-0233">DNA recombination</keyword>
<keyword id="KW-0234">DNA repair</keyword>
<keyword id="KW-0255">Endonuclease</keyword>
<keyword id="KW-0378">Hydrolase</keyword>
<keyword id="KW-0460">Magnesium</keyword>
<keyword id="KW-0479">Metal-binding</keyword>
<keyword id="KW-0540">Nuclease</keyword>
<organism>
    <name type="scientific">Streptococcus equi subsp. zooepidemicus (strain MGCS10565)</name>
    <dbReference type="NCBI Taxonomy" id="552526"/>
    <lineage>
        <taxon>Bacteria</taxon>
        <taxon>Bacillati</taxon>
        <taxon>Bacillota</taxon>
        <taxon>Bacilli</taxon>
        <taxon>Lactobacillales</taxon>
        <taxon>Streptococcaceae</taxon>
        <taxon>Streptococcus</taxon>
    </lineage>
</organism>
<sequence length="202" mass="23361">MVNYPHNPIRQKVTPLQKQQKHRQVDFANRGMSFEAAINATNAYYLAKGIAVIHKKPTPIQIVKVDYPRRSRAKIVEAYFKQASTTDYSGIYKGHYIDFEAKETRQKTAMPMKNFHAHQIEHMAAVLKQKGICFVLLHFATLKETYYLPAKALIDFYQIDRGNKSMPLDYIRKNGFEVKLGAFPQVPYLDIIEQKFLGGDYN</sequence>
<name>RECU_STREM</name>
<accession>B4U4I6</accession>
<reference key="1">
    <citation type="journal article" date="2008" name="PLoS ONE">
        <title>Genome sequence of a lancefield group C Streptococcus zooepidemicus strain causing epidemic nephritis: new information about an old disease.</title>
        <authorList>
            <person name="Beres S.B."/>
            <person name="Sesso R."/>
            <person name="Pinto S.W.L."/>
            <person name="Hoe N.P."/>
            <person name="Porcella S.F."/>
            <person name="Deleo F.R."/>
            <person name="Musser J.M."/>
        </authorList>
    </citation>
    <scope>NUCLEOTIDE SEQUENCE [LARGE SCALE GENOMIC DNA]</scope>
    <source>
        <strain>MGCS10565</strain>
    </source>
</reference>
<evidence type="ECO:0000255" key="1">
    <source>
        <dbReference type="HAMAP-Rule" id="MF_00130"/>
    </source>
</evidence>
<comment type="function">
    <text evidence="1">Endonuclease that resolves Holliday junction intermediates in genetic recombination. Cleaves mobile four-strand junctions by introducing symmetrical nicks in paired strands. Promotes annealing of linear ssDNA with homologous dsDNA. Required for DNA repair, homologous recombination and chromosome segregation.</text>
</comment>
<comment type="catalytic activity">
    <reaction evidence="1">
        <text>Endonucleolytic cleavage at a junction such as a reciprocal single-stranded crossover between two homologous DNA duplexes (Holliday junction).</text>
        <dbReference type="EC" id="3.1.21.10"/>
    </reaction>
</comment>
<comment type="cofactor">
    <cofactor evidence="1">
        <name>Mg(2+)</name>
        <dbReference type="ChEBI" id="CHEBI:18420"/>
    </cofactor>
    <text evidence="1">Binds 1 Mg(2+) ion per subunit.</text>
</comment>
<comment type="subcellular location">
    <subcellularLocation>
        <location evidence="1">Cytoplasm</location>
    </subcellularLocation>
</comment>
<comment type="similarity">
    <text evidence="1">Belongs to the RecU family.</text>
</comment>
<proteinExistence type="inferred from homology"/>